<comment type="function">
    <text evidence="2">Sesquiterpene synthase converting farnesyl diphosphate to nerolidol. Also has a monoterpene synthase activity, converting geranyl diphosphate into linalool as the major product. Has no diterpene synthase activity.</text>
</comment>
<comment type="catalytic activity">
    <reaction evidence="2">
        <text>(2E,6E)-farnesyl diphosphate + H2O = (3S,6E)-nerolidol + diphosphate</text>
        <dbReference type="Rhea" id="RHEA:27530"/>
        <dbReference type="ChEBI" id="CHEBI:15377"/>
        <dbReference type="ChEBI" id="CHEBI:33019"/>
        <dbReference type="ChEBI" id="CHEBI:59958"/>
        <dbReference type="ChEBI" id="CHEBI:175763"/>
        <dbReference type="EC" id="4.2.3.48"/>
    </reaction>
</comment>
<comment type="catalytic activity">
    <reaction evidence="2">
        <text>(2E)-geranyl diphosphate + H2O = (S)-linalool + diphosphate</text>
        <dbReference type="Rhea" id="RHEA:24116"/>
        <dbReference type="ChEBI" id="CHEBI:98"/>
        <dbReference type="ChEBI" id="CHEBI:15377"/>
        <dbReference type="ChEBI" id="CHEBI:33019"/>
        <dbReference type="ChEBI" id="CHEBI:58057"/>
        <dbReference type="EC" id="4.2.3.25"/>
    </reaction>
</comment>
<comment type="cofactor">
    <cofactor evidence="1">
        <name>Mg(2+)</name>
        <dbReference type="ChEBI" id="CHEBI:18420"/>
    </cofactor>
    <cofactor evidence="1">
        <name>Mn(2+)</name>
        <dbReference type="ChEBI" id="CHEBI:29035"/>
    </cofactor>
    <text evidence="1">Binds 3 Mg(2+) or Mn(2+) ions per subunit.</text>
</comment>
<comment type="pathway">
    <text>Secondary metabolite biosynthesis; terpenoid biosynthesis.</text>
</comment>
<comment type="induction">
    <text evidence="2">Up-regulated by alamethicin treatment.</text>
</comment>
<comment type="domain">
    <text evidence="1">The Asp-Asp-Xaa-Xaa-Asp/Glu (DDXXD/E) motif is important for the catalytic activity, presumably through binding to Mg(2+).</text>
</comment>
<comment type="miscellaneous">
    <text>Selaginella moellendorffii contains two distinct types of functional terpene synthases (TPS) genes, the typical seed plants TPS genes (SmTPSs) and a microbial type TPS genes (SmMTPSLs).</text>
</comment>
<comment type="similarity">
    <text evidence="3">Belongs to the terpene synthase family.</text>
</comment>
<name>MTS22_SELML</name>
<reference key="1">
    <citation type="journal article" date="2012" name="Proc. Natl. Acad. Sci. U.S.A.">
        <title>Nonseed plant Selaginella moellendorfii has both seed plant and microbial types of terpene synthases.</title>
        <authorList>
            <person name="Li G."/>
            <person name="Kollner T.G."/>
            <person name="Yin Y."/>
            <person name="Jiang Y."/>
            <person name="Chen H."/>
            <person name="Xu Y."/>
            <person name="Gershenzon J."/>
            <person name="Pichersky E."/>
            <person name="Chen F."/>
        </authorList>
    </citation>
    <scope>NUCLEOTIDE SEQUENCE [MRNA]</scope>
    <scope>FUNCTION</scope>
    <scope>CATALYTIC ACTIVITY</scope>
    <scope>INDUCTION BY ELICITOR</scope>
    <scope>GENE FAMILY</scope>
    <scope>NOMENCLATURE</scope>
</reference>
<reference key="2">
    <citation type="journal article" date="2011" name="Science">
        <title>The Selaginella genome identifies genetic changes associated with the evolution of vascular plants.</title>
        <authorList>
            <person name="Banks J.A."/>
            <person name="Nishiyama T."/>
            <person name="Hasebe M."/>
            <person name="Bowman J.L."/>
            <person name="Gribskov M."/>
            <person name="dePamphilis C."/>
            <person name="Albert V.A."/>
            <person name="Aono N."/>
            <person name="Aoyama T."/>
            <person name="Ambrose B.A."/>
            <person name="Ashton N.W."/>
            <person name="Axtell M.J."/>
            <person name="Barker E."/>
            <person name="Barker M.S."/>
            <person name="Bennetzen J.L."/>
            <person name="Bonawitz N.D."/>
            <person name="Chapple C."/>
            <person name="Cheng C."/>
            <person name="Correa L.G."/>
            <person name="Dacre M."/>
            <person name="DeBarry J."/>
            <person name="Dreyer I."/>
            <person name="Elias M."/>
            <person name="Engstrom E.M."/>
            <person name="Estelle M."/>
            <person name="Feng L."/>
            <person name="Finet C."/>
            <person name="Floyd S.K."/>
            <person name="Frommer W.B."/>
            <person name="Fujita T."/>
            <person name="Gramzow L."/>
            <person name="Gutensohn M."/>
            <person name="Harholt J."/>
            <person name="Hattori M."/>
            <person name="Heyl A."/>
            <person name="Hirai T."/>
            <person name="Hiwatashi Y."/>
            <person name="Ishikawa M."/>
            <person name="Iwata M."/>
            <person name="Karol K.G."/>
            <person name="Koehler B."/>
            <person name="Kolukisaoglu U."/>
            <person name="Kubo M."/>
            <person name="Kurata T."/>
            <person name="Lalonde S."/>
            <person name="Li K."/>
            <person name="Li Y."/>
            <person name="Litt A."/>
            <person name="Lyons E."/>
            <person name="Manning G."/>
            <person name="Maruyama T."/>
            <person name="Michael T.P."/>
            <person name="Mikami K."/>
            <person name="Miyazaki S."/>
            <person name="Morinaga S."/>
            <person name="Murata T."/>
            <person name="Mueller-Roeber B."/>
            <person name="Nelson D.R."/>
            <person name="Obara M."/>
            <person name="Oguri Y."/>
            <person name="Olmstead R.G."/>
            <person name="Onodera N."/>
            <person name="Petersen B.L."/>
            <person name="Pils B."/>
            <person name="Prigge M."/>
            <person name="Rensing S.A."/>
            <person name="Riano-Pachon D.M."/>
            <person name="Roberts A.W."/>
            <person name="Sato Y."/>
            <person name="Scheller H.V."/>
            <person name="Schulz B."/>
            <person name="Schulz C."/>
            <person name="Shakirov E.V."/>
            <person name="Shibagaki N."/>
            <person name="Shinohara N."/>
            <person name="Shippen D.E."/>
            <person name="Soerensen I."/>
            <person name="Sotooka R."/>
            <person name="Sugimoto N."/>
            <person name="Sugita M."/>
            <person name="Sumikawa N."/>
            <person name="Tanurdzic M."/>
            <person name="Theissen G."/>
            <person name="Ulvskov P."/>
            <person name="Wakazuki S."/>
            <person name="Weng J.K."/>
            <person name="Willats W.W."/>
            <person name="Wipf D."/>
            <person name="Wolf P.G."/>
            <person name="Yang L."/>
            <person name="Zimmer A.D."/>
            <person name="Zhu Q."/>
            <person name="Mitros T."/>
            <person name="Hellsten U."/>
            <person name="Loque D."/>
            <person name="Otillar R."/>
            <person name="Salamov A."/>
            <person name="Schmutz J."/>
            <person name="Shapiro H."/>
            <person name="Lindquist E."/>
            <person name="Lucas S."/>
            <person name="Rokhsar D."/>
            <person name="Grigoriev I.V."/>
        </authorList>
    </citation>
    <scope>NUCLEOTIDE SEQUENCE [LARGE SCALE GENOMIC DNA]</scope>
</reference>
<keyword id="KW-0456">Lyase</keyword>
<keyword id="KW-0460">Magnesium</keyword>
<keyword id="KW-0479">Metal-binding</keyword>
<keyword id="KW-1185">Reference proteome</keyword>
<gene>
    <name type="ORF">SELMODRAFT_413294</name>
</gene>
<accession>D8RNZ9</accession>
<dbReference type="EC" id="4.2.3.48"/>
<dbReference type="EC" id="4.2.3.25"/>
<dbReference type="EMBL" id="JX413786">
    <property type="protein sequence ID" value="AFR34006.1"/>
    <property type="molecule type" value="mRNA"/>
</dbReference>
<dbReference type="EMBL" id="GL377585">
    <property type="protein sequence ID" value="EFJ26173.1"/>
    <property type="molecule type" value="Genomic_DNA"/>
</dbReference>
<dbReference type="SMR" id="D8RNZ9"/>
<dbReference type="EnsemblPlants" id="EFJ26173">
    <property type="protein sequence ID" value="EFJ26173"/>
    <property type="gene ID" value="SELMODRAFT_413294"/>
</dbReference>
<dbReference type="Gramene" id="EFJ26173">
    <property type="protein sequence ID" value="EFJ26173"/>
    <property type="gene ID" value="SELMODRAFT_413294"/>
</dbReference>
<dbReference type="KEGG" id="smo:SELMODRAFT_413294"/>
<dbReference type="eggNOG" id="ENOG502SM5W">
    <property type="taxonomic scope" value="Eukaryota"/>
</dbReference>
<dbReference type="HOGENOM" id="CLU_063343_0_0_1"/>
<dbReference type="InParanoid" id="D8RNZ9"/>
<dbReference type="OMA" id="RESIEWM"/>
<dbReference type="OrthoDB" id="2861623at2759"/>
<dbReference type="BioCyc" id="MetaCyc:MONOMER-17912"/>
<dbReference type="UniPathway" id="UPA00213"/>
<dbReference type="Proteomes" id="UP000001514">
    <property type="component" value="Unassembled WGS sequence"/>
</dbReference>
<dbReference type="GO" id="GO:0046872">
    <property type="term" value="F:metal ion binding"/>
    <property type="evidence" value="ECO:0007669"/>
    <property type="project" value="UniProtKB-KW"/>
</dbReference>
<dbReference type="GO" id="GO:0034007">
    <property type="term" value="F:S-linalool synthase activity"/>
    <property type="evidence" value="ECO:0007669"/>
    <property type="project" value="UniProtKB-EC"/>
</dbReference>
<dbReference type="GO" id="GO:0010333">
    <property type="term" value="F:terpene synthase activity"/>
    <property type="evidence" value="ECO:0007669"/>
    <property type="project" value="InterPro"/>
</dbReference>
<dbReference type="GO" id="GO:0016114">
    <property type="term" value="P:terpenoid biosynthetic process"/>
    <property type="evidence" value="ECO:0007669"/>
    <property type="project" value="UniProtKB-UniPathway"/>
</dbReference>
<dbReference type="Gene3D" id="1.10.600.10">
    <property type="entry name" value="Farnesyl Diphosphate Synthase"/>
    <property type="match status" value="1"/>
</dbReference>
<dbReference type="InterPro" id="IPR008949">
    <property type="entry name" value="Isoprenoid_synthase_dom_sf"/>
</dbReference>
<dbReference type="InterPro" id="IPR034686">
    <property type="entry name" value="Terpene_cyclase-like_2"/>
</dbReference>
<dbReference type="PANTHER" id="PTHR35201:SF4">
    <property type="entry name" value="BETA-PINACENE SYNTHASE-RELATED"/>
    <property type="match status" value="1"/>
</dbReference>
<dbReference type="PANTHER" id="PTHR35201">
    <property type="entry name" value="TERPENE SYNTHASE"/>
    <property type="match status" value="1"/>
</dbReference>
<dbReference type="Pfam" id="PF19086">
    <property type="entry name" value="Terpene_syn_C_2"/>
    <property type="match status" value="1"/>
</dbReference>
<dbReference type="SFLD" id="SFLDS00005">
    <property type="entry name" value="Isoprenoid_Synthase_Type_I"/>
    <property type="match status" value="1"/>
</dbReference>
<dbReference type="SFLD" id="SFLDG01020">
    <property type="entry name" value="Terpene_Cyclase_Like_2"/>
    <property type="match status" value="1"/>
</dbReference>
<dbReference type="SUPFAM" id="SSF48576">
    <property type="entry name" value="Terpenoid synthases"/>
    <property type="match status" value="1"/>
</dbReference>
<evidence type="ECO:0000250" key="1"/>
<evidence type="ECO:0000269" key="2">
    <source>
    </source>
</evidence>
<evidence type="ECO:0000305" key="3"/>
<feature type="chain" id="PRO_0000421943" description="(3S,6E)-nerolidol synthase">
    <location>
        <begin position="1"/>
        <end position="368"/>
    </location>
</feature>
<feature type="short sequence motif" description="DDXXE motif">
    <location>
        <begin position="91"/>
        <end position="95"/>
    </location>
</feature>
<feature type="binding site" evidence="1">
    <location>
        <position position="91"/>
    </location>
    <ligand>
        <name>Mg(2+)</name>
        <dbReference type="ChEBI" id="CHEBI:18420"/>
        <label>1</label>
    </ligand>
</feature>
<feature type="binding site" evidence="1">
    <location>
        <position position="91"/>
    </location>
    <ligand>
        <name>Mg(2+)</name>
        <dbReference type="ChEBI" id="CHEBI:18420"/>
        <label>2</label>
    </ligand>
</feature>
<feature type="binding site" evidence="1">
    <location>
        <position position="228"/>
    </location>
    <ligand>
        <name>Mg(2+)</name>
        <dbReference type="ChEBI" id="CHEBI:18420"/>
        <label>3</label>
    </ligand>
</feature>
<feature type="binding site" evidence="1">
    <location>
        <position position="232"/>
    </location>
    <ligand>
        <name>Mg(2+)</name>
        <dbReference type="ChEBI" id="CHEBI:18420"/>
        <label>3</label>
    </ligand>
</feature>
<proteinExistence type="evidence at protein level"/>
<organism>
    <name type="scientific">Selaginella moellendorffii</name>
    <name type="common">Spikemoss</name>
    <dbReference type="NCBI Taxonomy" id="88036"/>
    <lineage>
        <taxon>Eukaryota</taxon>
        <taxon>Viridiplantae</taxon>
        <taxon>Streptophyta</taxon>
        <taxon>Embryophyta</taxon>
        <taxon>Tracheophyta</taxon>
        <taxon>Lycopodiopsida</taxon>
        <taxon>Selaginellales</taxon>
        <taxon>Selaginellaceae</taxon>
        <taxon>Selaginella</taxon>
    </lineage>
</organism>
<sequence length="368" mass="41840">MKDLFRISGVTHFELPLLPNNIPFACHPEFQSISLKIDKWFLGKMRIADETSKKKVLESRIGLYACMMHPHAKREKLVLAGKHLWAVFLLDDLLESSSKHEMPQLNLTISNLANGNSDEDYTNPLLALYREVMEEIRAAMEPPLLDRYVQCVGASLEAVKDQVHRRAEKSIPGVEEYKLARRATGFMEAVGGIMTEFCIGIRLSQAQIQSPIFRELLNSVSDHVILVNDLLSFRKEFYGGDYHHNWISVLLHHSPRGTSFQDVVDRLCEMIQAEELSILALRKKIADEEGSDSELTKFAREFPMVASGSLVWSYVTGRYHGYGNPLLTGEIFSGTWLLHPMATVVLPSKFRMDTMRFSLAPKKRDSFP</sequence>
<protein>
    <recommendedName>
        <fullName>(3S,6E)-nerolidol synthase</fullName>
        <ecNumber>4.2.3.48</ecNumber>
    </recommendedName>
    <alternativeName>
        <fullName>Microbial Terpene synthase-like protein 22</fullName>
        <shortName>SmMTPSL22</shortName>
    </alternativeName>
    <alternativeName>
        <fullName>S-linalool synthase</fullName>
        <ecNumber>4.2.3.25</ecNumber>
    </alternativeName>
</protein>